<feature type="chain" id="PRO_0000309659" description="Hydroxyacylglutathione hydrolase">
    <location>
        <begin position="1"/>
        <end position="256"/>
    </location>
</feature>
<feature type="binding site" evidence="1">
    <location>
        <position position="57"/>
    </location>
    <ligand>
        <name>Zn(2+)</name>
        <dbReference type="ChEBI" id="CHEBI:29105"/>
        <label>1</label>
    </ligand>
</feature>
<feature type="binding site" evidence="1">
    <location>
        <position position="59"/>
    </location>
    <ligand>
        <name>Zn(2+)</name>
        <dbReference type="ChEBI" id="CHEBI:29105"/>
        <label>1</label>
    </ligand>
</feature>
<feature type="binding site" evidence="1">
    <location>
        <position position="61"/>
    </location>
    <ligand>
        <name>Zn(2+)</name>
        <dbReference type="ChEBI" id="CHEBI:29105"/>
        <label>2</label>
    </ligand>
</feature>
<feature type="binding site" evidence="1">
    <location>
        <position position="62"/>
    </location>
    <ligand>
        <name>Zn(2+)</name>
        <dbReference type="ChEBI" id="CHEBI:29105"/>
        <label>2</label>
    </ligand>
</feature>
<feature type="binding site" evidence="1">
    <location>
        <position position="115"/>
    </location>
    <ligand>
        <name>Zn(2+)</name>
        <dbReference type="ChEBI" id="CHEBI:29105"/>
        <label>1</label>
    </ligand>
</feature>
<feature type="binding site" evidence="1">
    <location>
        <position position="134"/>
    </location>
    <ligand>
        <name>Zn(2+)</name>
        <dbReference type="ChEBI" id="CHEBI:29105"/>
        <label>1</label>
    </ligand>
</feature>
<feature type="binding site" evidence="1">
    <location>
        <position position="134"/>
    </location>
    <ligand>
        <name>Zn(2+)</name>
        <dbReference type="ChEBI" id="CHEBI:29105"/>
        <label>2</label>
    </ligand>
</feature>
<feature type="binding site" evidence="1">
    <location>
        <position position="172"/>
    </location>
    <ligand>
        <name>Zn(2+)</name>
        <dbReference type="ChEBI" id="CHEBI:29105"/>
        <label>2</label>
    </ligand>
</feature>
<keyword id="KW-0378">Hydrolase</keyword>
<keyword id="KW-0479">Metal-binding</keyword>
<keyword id="KW-1185">Reference proteome</keyword>
<keyword id="KW-0862">Zinc</keyword>
<evidence type="ECO:0000255" key="1">
    <source>
        <dbReference type="HAMAP-Rule" id="MF_01374"/>
    </source>
</evidence>
<protein>
    <recommendedName>
        <fullName evidence="1">Hydroxyacylglutathione hydrolase</fullName>
        <ecNumber evidence="1">3.1.2.6</ecNumber>
    </recommendedName>
    <alternativeName>
        <fullName evidence="1">Glyoxalase II</fullName>
        <shortName evidence="1">Glx II</shortName>
    </alternativeName>
</protein>
<name>GLO2_MARMM</name>
<organism>
    <name type="scientific">Maricaulis maris (strain MCS10)</name>
    <name type="common">Caulobacter maris</name>
    <dbReference type="NCBI Taxonomy" id="394221"/>
    <lineage>
        <taxon>Bacteria</taxon>
        <taxon>Pseudomonadati</taxon>
        <taxon>Pseudomonadota</taxon>
        <taxon>Alphaproteobacteria</taxon>
        <taxon>Maricaulales</taxon>
        <taxon>Maricaulaceae</taxon>
        <taxon>Maricaulis</taxon>
    </lineage>
</organism>
<comment type="function">
    <text evidence="1">Thiolesterase that catalyzes the hydrolysis of S-D-lactoyl-glutathione to form glutathione and D-lactic acid.</text>
</comment>
<comment type="catalytic activity">
    <reaction evidence="1">
        <text>an S-(2-hydroxyacyl)glutathione + H2O = a 2-hydroxy carboxylate + glutathione + H(+)</text>
        <dbReference type="Rhea" id="RHEA:21864"/>
        <dbReference type="ChEBI" id="CHEBI:15377"/>
        <dbReference type="ChEBI" id="CHEBI:15378"/>
        <dbReference type="ChEBI" id="CHEBI:57925"/>
        <dbReference type="ChEBI" id="CHEBI:58896"/>
        <dbReference type="ChEBI" id="CHEBI:71261"/>
        <dbReference type="EC" id="3.1.2.6"/>
    </reaction>
</comment>
<comment type="cofactor">
    <cofactor evidence="1">
        <name>Zn(2+)</name>
        <dbReference type="ChEBI" id="CHEBI:29105"/>
    </cofactor>
    <text evidence="1">Binds 2 Zn(2+) ions per subunit.</text>
</comment>
<comment type="pathway">
    <text evidence="1">Secondary metabolite metabolism; methylglyoxal degradation; (R)-lactate from methylglyoxal: step 2/2.</text>
</comment>
<comment type="subunit">
    <text evidence="1">Monomer.</text>
</comment>
<comment type="similarity">
    <text evidence="1">Belongs to the metallo-beta-lactamase superfamily. Glyoxalase II family.</text>
</comment>
<reference key="1">
    <citation type="submission" date="2006-08" db="EMBL/GenBank/DDBJ databases">
        <title>Complete sequence of Maricaulis maris MCS10.</title>
        <authorList>
            <consortium name="US DOE Joint Genome Institute"/>
            <person name="Copeland A."/>
            <person name="Lucas S."/>
            <person name="Lapidus A."/>
            <person name="Barry K."/>
            <person name="Detter J.C."/>
            <person name="Glavina del Rio T."/>
            <person name="Hammon N."/>
            <person name="Israni S."/>
            <person name="Dalin E."/>
            <person name="Tice H."/>
            <person name="Pitluck S."/>
            <person name="Saunders E."/>
            <person name="Brettin T."/>
            <person name="Bruce D."/>
            <person name="Han C."/>
            <person name="Tapia R."/>
            <person name="Gilna P."/>
            <person name="Schmutz J."/>
            <person name="Larimer F."/>
            <person name="Land M."/>
            <person name="Hauser L."/>
            <person name="Kyrpides N."/>
            <person name="Mikhailova N."/>
            <person name="Viollier P."/>
            <person name="Stephens C."/>
            <person name="Richardson P."/>
        </authorList>
    </citation>
    <scope>NUCLEOTIDE SEQUENCE [LARGE SCALE GENOMIC DNA]</scope>
    <source>
        <strain>MCS10</strain>
    </source>
</reference>
<accession>Q0AM20</accession>
<dbReference type="EC" id="3.1.2.6" evidence="1"/>
<dbReference type="EMBL" id="CP000449">
    <property type="protein sequence ID" value="ABI66673.1"/>
    <property type="molecule type" value="Genomic_DNA"/>
</dbReference>
<dbReference type="RefSeq" id="WP_011644318.1">
    <property type="nucleotide sequence ID" value="NC_008347.1"/>
</dbReference>
<dbReference type="SMR" id="Q0AM20"/>
<dbReference type="STRING" id="394221.Mmar10_2381"/>
<dbReference type="KEGG" id="mmr:Mmar10_2381"/>
<dbReference type="eggNOG" id="COG0491">
    <property type="taxonomic scope" value="Bacteria"/>
</dbReference>
<dbReference type="HOGENOM" id="CLU_030571_4_1_5"/>
<dbReference type="OrthoDB" id="9802248at2"/>
<dbReference type="UniPathway" id="UPA00619">
    <property type="reaction ID" value="UER00676"/>
</dbReference>
<dbReference type="Proteomes" id="UP000001964">
    <property type="component" value="Chromosome"/>
</dbReference>
<dbReference type="GO" id="GO:0004416">
    <property type="term" value="F:hydroxyacylglutathione hydrolase activity"/>
    <property type="evidence" value="ECO:0007669"/>
    <property type="project" value="UniProtKB-UniRule"/>
</dbReference>
<dbReference type="GO" id="GO:0046872">
    <property type="term" value="F:metal ion binding"/>
    <property type="evidence" value="ECO:0007669"/>
    <property type="project" value="UniProtKB-KW"/>
</dbReference>
<dbReference type="GO" id="GO:0019243">
    <property type="term" value="P:methylglyoxal catabolic process to D-lactate via S-lactoyl-glutathione"/>
    <property type="evidence" value="ECO:0007669"/>
    <property type="project" value="InterPro"/>
</dbReference>
<dbReference type="CDD" id="cd07723">
    <property type="entry name" value="hydroxyacylglutathione_hydrolase_MBL-fold"/>
    <property type="match status" value="1"/>
</dbReference>
<dbReference type="Gene3D" id="3.60.15.10">
    <property type="entry name" value="Ribonuclease Z/Hydroxyacylglutathione hydrolase-like"/>
    <property type="match status" value="1"/>
</dbReference>
<dbReference type="HAMAP" id="MF_01374">
    <property type="entry name" value="Glyoxalase_2"/>
    <property type="match status" value="1"/>
</dbReference>
<dbReference type="InterPro" id="IPR035680">
    <property type="entry name" value="Clx_II_MBL"/>
</dbReference>
<dbReference type="InterPro" id="IPR050110">
    <property type="entry name" value="Glyoxalase_II_hydrolase"/>
</dbReference>
<dbReference type="InterPro" id="IPR032282">
    <property type="entry name" value="HAGH_C"/>
</dbReference>
<dbReference type="InterPro" id="IPR017782">
    <property type="entry name" value="Hydroxyacylglutathione_Hdrlase"/>
</dbReference>
<dbReference type="InterPro" id="IPR001279">
    <property type="entry name" value="Metallo-B-lactamas"/>
</dbReference>
<dbReference type="InterPro" id="IPR036866">
    <property type="entry name" value="RibonucZ/Hydroxyglut_hydro"/>
</dbReference>
<dbReference type="NCBIfam" id="TIGR03413">
    <property type="entry name" value="GSH_gloB"/>
    <property type="match status" value="1"/>
</dbReference>
<dbReference type="PANTHER" id="PTHR43705">
    <property type="entry name" value="HYDROXYACYLGLUTATHIONE HYDROLASE"/>
    <property type="match status" value="1"/>
</dbReference>
<dbReference type="PANTHER" id="PTHR43705:SF1">
    <property type="entry name" value="HYDROXYACYLGLUTATHIONE HYDROLASE GLOB"/>
    <property type="match status" value="1"/>
</dbReference>
<dbReference type="Pfam" id="PF16123">
    <property type="entry name" value="HAGH_C"/>
    <property type="match status" value="1"/>
</dbReference>
<dbReference type="Pfam" id="PF00753">
    <property type="entry name" value="Lactamase_B"/>
    <property type="match status" value="1"/>
</dbReference>
<dbReference type="PIRSF" id="PIRSF005457">
    <property type="entry name" value="Glx"/>
    <property type="match status" value="1"/>
</dbReference>
<dbReference type="SMART" id="SM00849">
    <property type="entry name" value="Lactamase_B"/>
    <property type="match status" value="1"/>
</dbReference>
<dbReference type="SUPFAM" id="SSF56281">
    <property type="entry name" value="Metallo-hydrolase/oxidoreductase"/>
    <property type="match status" value="1"/>
</dbReference>
<sequence length="256" mass="28458">MSELLIRQFPCLSDNYGFLIHDPDSGETATIDTPDADVILNEADQAGWSITQIWNTHHHFDHAGGNETIQALTGAKVVAPRYDRHRIPGISMEVEDGDVISLGDHKAKVFYTPGHTMGHVCYHMPMDGIAFVGDTLFALGCGRLFEGTPAEMWHSLSRLAALPDETRIYCAHEYTEANARFALSIDPDNHDLQVYAAMVEGERARGEPTVPTTIAAEKAANPFLRPDDPAIRARLGMEHDDDEEVFAEIRRRKDSF</sequence>
<proteinExistence type="inferred from homology"/>
<gene>
    <name evidence="1" type="primary">gloB</name>
    <name type="ordered locus">Mmar10_2381</name>
</gene>